<name>RIMK_DESPS</name>
<keyword id="KW-0067">ATP-binding</keyword>
<keyword id="KW-0436">Ligase</keyword>
<keyword id="KW-0460">Magnesium</keyword>
<keyword id="KW-0464">Manganese</keyword>
<keyword id="KW-0479">Metal-binding</keyword>
<keyword id="KW-0547">Nucleotide-binding</keyword>
<keyword id="KW-0648">Protein biosynthesis</keyword>
<keyword id="KW-1185">Reference proteome</keyword>
<comment type="cofactor">
    <cofactor evidence="1">
        <name>Mg(2+)</name>
        <dbReference type="ChEBI" id="CHEBI:18420"/>
    </cofactor>
    <cofactor evidence="1">
        <name>Mn(2+)</name>
        <dbReference type="ChEBI" id="CHEBI:29035"/>
    </cofactor>
    <text evidence="1">Binds 2 magnesium or manganese ions per subunit.</text>
</comment>
<comment type="similarity">
    <text evidence="3">In the C-terminal section; belongs to the RimK family.</text>
</comment>
<dbReference type="EC" id="6.3.2.-"/>
<dbReference type="EMBL" id="CR522870">
    <property type="protein sequence ID" value="CAG37121.1"/>
    <property type="molecule type" value="Genomic_DNA"/>
</dbReference>
<dbReference type="RefSeq" id="WP_011189633.1">
    <property type="nucleotide sequence ID" value="NC_006138.1"/>
</dbReference>
<dbReference type="SMR" id="Q6AKK4"/>
<dbReference type="STRING" id="177439.DP2392"/>
<dbReference type="KEGG" id="dps:DP2392"/>
<dbReference type="eggNOG" id="COG0189">
    <property type="taxonomic scope" value="Bacteria"/>
</dbReference>
<dbReference type="eggNOG" id="COG4067">
    <property type="taxonomic scope" value="Bacteria"/>
</dbReference>
<dbReference type="HOGENOM" id="CLU_045509_0_0_7"/>
<dbReference type="OrthoDB" id="3865600at2"/>
<dbReference type="Proteomes" id="UP000000602">
    <property type="component" value="Chromosome"/>
</dbReference>
<dbReference type="GO" id="GO:0005737">
    <property type="term" value="C:cytoplasm"/>
    <property type="evidence" value="ECO:0007669"/>
    <property type="project" value="TreeGrafter"/>
</dbReference>
<dbReference type="GO" id="GO:0005524">
    <property type="term" value="F:ATP binding"/>
    <property type="evidence" value="ECO:0007669"/>
    <property type="project" value="UniProtKB-KW"/>
</dbReference>
<dbReference type="GO" id="GO:0046872">
    <property type="term" value="F:metal ion binding"/>
    <property type="evidence" value="ECO:0007669"/>
    <property type="project" value="UniProtKB-KW"/>
</dbReference>
<dbReference type="GO" id="GO:0018169">
    <property type="term" value="F:ribosomal S6-glutamic acid ligase activity"/>
    <property type="evidence" value="ECO:0007669"/>
    <property type="project" value="TreeGrafter"/>
</dbReference>
<dbReference type="GO" id="GO:0036211">
    <property type="term" value="P:protein modification process"/>
    <property type="evidence" value="ECO:0007669"/>
    <property type="project" value="InterPro"/>
</dbReference>
<dbReference type="GO" id="GO:0009432">
    <property type="term" value="P:SOS response"/>
    <property type="evidence" value="ECO:0007669"/>
    <property type="project" value="TreeGrafter"/>
</dbReference>
<dbReference type="GO" id="GO:0006412">
    <property type="term" value="P:translation"/>
    <property type="evidence" value="ECO:0007669"/>
    <property type="project" value="UniProtKB-KW"/>
</dbReference>
<dbReference type="FunFam" id="3.30.1490.20:FF:000005">
    <property type="entry name" value="Probable alpha-L-glutamate ligase 1"/>
    <property type="match status" value="1"/>
</dbReference>
<dbReference type="Gene3D" id="3.40.50.20">
    <property type="match status" value="1"/>
</dbReference>
<dbReference type="Gene3D" id="2.40.70.10">
    <property type="entry name" value="Acid Proteases"/>
    <property type="match status" value="1"/>
</dbReference>
<dbReference type="Gene3D" id="3.30.1490.20">
    <property type="entry name" value="ATP-grasp fold, A domain"/>
    <property type="match status" value="1"/>
</dbReference>
<dbReference type="Gene3D" id="3.30.470.20">
    <property type="entry name" value="ATP-grasp fold, B domain"/>
    <property type="match status" value="1"/>
</dbReference>
<dbReference type="InterPro" id="IPR011761">
    <property type="entry name" value="ATP-grasp"/>
</dbReference>
<dbReference type="InterPro" id="IPR013651">
    <property type="entry name" value="ATP-grasp_RimK-type"/>
</dbReference>
<dbReference type="InterPro" id="IPR013815">
    <property type="entry name" value="ATP_grasp_subdomain_1"/>
</dbReference>
<dbReference type="InterPro" id="IPR021109">
    <property type="entry name" value="Peptidase_aspartic_dom_sf"/>
</dbReference>
<dbReference type="InterPro" id="IPR008503">
    <property type="entry name" value="Put_Zn_protease"/>
</dbReference>
<dbReference type="InterPro" id="IPR041107">
    <property type="entry name" value="Rimk_N"/>
</dbReference>
<dbReference type="InterPro" id="IPR004666">
    <property type="entry name" value="Rp_bS6_RimK/Lys_biosynth_LsyX"/>
</dbReference>
<dbReference type="NCBIfam" id="NF007764">
    <property type="entry name" value="PRK10446.1"/>
    <property type="match status" value="1"/>
</dbReference>
<dbReference type="NCBIfam" id="TIGR00768">
    <property type="entry name" value="rimK_fam"/>
    <property type="match status" value="1"/>
</dbReference>
<dbReference type="PANTHER" id="PTHR21621:SF7">
    <property type="entry name" value="RIBOSOMAL PROTEIN BS6--L-GLUTAMATE LIGASE"/>
    <property type="match status" value="1"/>
</dbReference>
<dbReference type="PANTHER" id="PTHR21621">
    <property type="entry name" value="RIBOSOMAL PROTEIN S6 MODIFICATION PROTEIN"/>
    <property type="match status" value="1"/>
</dbReference>
<dbReference type="Pfam" id="PF08443">
    <property type="entry name" value="RimK"/>
    <property type="match status" value="1"/>
</dbReference>
<dbReference type="Pfam" id="PF18030">
    <property type="entry name" value="Rimk_N"/>
    <property type="match status" value="1"/>
</dbReference>
<dbReference type="Pfam" id="PF05618">
    <property type="entry name" value="Zn_protease"/>
    <property type="match status" value="1"/>
</dbReference>
<dbReference type="SUPFAM" id="SSF50630">
    <property type="entry name" value="Acid proteases"/>
    <property type="match status" value="1"/>
</dbReference>
<dbReference type="SUPFAM" id="SSF56059">
    <property type="entry name" value="Glutathione synthetase ATP-binding domain-like"/>
    <property type="match status" value="1"/>
</dbReference>
<dbReference type="PROSITE" id="PS50975">
    <property type="entry name" value="ATP_GRASP"/>
    <property type="match status" value="1"/>
</dbReference>
<evidence type="ECO:0000250" key="1"/>
<evidence type="ECO:0000255" key="2">
    <source>
        <dbReference type="PROSITE-ProRule" id="PRU00409"/>
    </source>
</evidence>
<evidence type="ECO:0000305" key="3"/>
<gene>
    <name type="primary">rimK</name>
    <name type="ordered locus">DP2392</name>
</gene>
<protein>
    <recommendedName>
        <fullName>Probable alpha-L-glutamate ligase</fullName>
        <ecNumber>6.3.2.-</ecNumber>
    </recommendedName>
</protein>
<feature type="chain" id="PRO_0000205453" description="Probable alpha-L-glutamate ligase">
    <location>
        <begin position="1"/>
        <end position="464"/>
    </location>
</feature>
<feature type="domain" description="ATP-grasp" evidence="2">
    <location>
        <begin position="268"/>
        <end position="451"/>
    </location>
</feature>
<feature type="region of interest" description="Unknown">
    <location>
        <begin position="1"/>
        <end position="164"/>
    </location>
</feature>
<feature type="region of interest" description="Alpha-L-glutamate ligase">
    <location>
        <begin position="165"/>
        <end position="464"/>
    </location>
</feature>
<feature type="binding site" evidence="1">
    <location>
        <position position="305"/>
    </location>
    <ligand>
        <name>ATP</name>
        <dbReference type="ChEBI" id="CHEBI:30616"/>
    </ligand>
</feature>
<feature type="binding site" evidence="2">
    <location>
        <begin position="342"/>
        <end position="343"/>
    </location>
    <ligand>
        <name>ATP</name>
        <dbReference type="ChEBI" id="CHEBI:30616"/>
    </ligand>
</feature>
<feature type="binding site" evidence="2">
    <location>
        <begin position="376"/>
        <end position="377"/>
    </location>
    <ligand>
        <name>ATP</name>
        <dbReference type="ChEBI" id="CHEBI:30616"/>
    </ligand>
</feature>
<feature type="binding site" evidence="2">
    <location>
        <position position="412"/>
    </location>
    <ligand>
        <name>Mg(2+)</name>
        <dbReference type="ChEBI" id="CHEBI:18420"/>
        <label>1</label>
    </ligand>
</feature>
<feature type="binding site" evidence="2">
    <location>
        <position position="412"/>
    </location>
    <ligand>
        <name>Mn(2+)</name>
        <dbReference type="ChEBI" id="CHEBI:29035"/>
        <label>1</label>
    </ligand>
</feature>
<feature type="binding site" evidence="2">
    <location>
        <position position="424"/>
    </location>
    <ligand>
        <name>Mg(2+)</name>
        <dbReference type="ChEBI" id="CHEBI:18420"/>
        <label>1</label>
    </ligand>
</feature>
<feature type="binding site" evidence="2">
    <location>
        <position position="424"/>
    </location>
    <ligand>
        <name>Mg(2+)</name>
        <dbReference type="ChEBI" id="CHEBI:18420"/>
        <label>2</label>
    </ligand>
</feature>
<feature type="binding site" evidence="2">
    <location>
        <position position="424"/>
    </location>
    <ligand>
        <name>Mn(2+)</name>
        <dbReference type="ChEBI" id="CHEBI:29035"/>
        <label>1</label>
    </ligand>
</feature>
<feature type="binding site" evidence="2">
    <location>
        <position position="424"/>
    </location>
    <ligand>
        <name>Mn(2+)</name>
        <dbReference type="ChEBI" id="CHEBI:29035"/>
        <label>2</label>
    </ligand>
</feature>
<feature type="binding site" evidence="2">
    <location>
        <position position="426"/>
    </location>
    <ligand>
        <name>Mg(2+)</name>
        <dbReference type="ChEBI" id="CHEBI:18420"/>
        <label>2</label>
    </ligand>
</feature>
<feature type="binding site" evidence="2">
    <location>
        <position position="426"/>
    </location>
    <ligand>
        <name>Mn(2+)</name>
        <dbReference type="ChEBI" id="CHEBI:29035"/>
        <label>2</label>
    </ligand>
</feature>
<accession>Q6AKK4</accession>
<reference key="1">
    <citation type="journal article" date="2004" name="Environ. Microbiol.">
        <title>The genome of Desulfotalea psychrophila, a sulfate-reducing bacterium from permanently cold Arctic sediments.</title>
        <authorList>
            <person name="Rabus R."/>
            <person name="Ruepp A."/>
            <person name="Frickey T."/>
            <person name="Rattei T."/>
            <person name="Fartmann B."/>
            <person name="Stark M."/>
            <person name="Bauer M."/>
            <person name="Zibat A."/>
            <person name="Lombardot T."/>
            <person name="Becker I."/>
            <person name="Amann J."/>
            <person name="Gellner K."/>
            <person name="Teeling H."/>
            <person name="Leuschner W.D."/>
            <person name="Gloeckner F.-O."/>
            <person name="Lupas A.N."/>
            <person name="Amann R."/>
            <person name="Klenk H.-P."/>
        </authorList>
    </citation>
    <scope>NUCLEOTIDE SEQUENCE [LARGE SCALE GENOMIC DNA]</scope>
    <source>
        <strain>DSM 12343 / LSv54</strain>
    </source>
</reference>
<organism>
    <name type="scientific">Desulfotalea psychrophila (strain LSv54 / DSM 12343)</name>
    <dbReference type="NCBI Taxonomy" id="177439"/>
    <lineage>
        <taxon>Bacteria</taxon>
        <taxon>Pseudomonadati</taxon>
        <taxon>Thermodesulfobacteriota</taxon>
        <taxon>Desulfobulbia</taxon>
        <taxon>Desulfobulbales</taxon>
        <taxon>Desulfocapsaceae</taxon>
        <taxon>Desulfotalea</taxon>
    </lineage>
</organism>
<sequence>MSQDIAKKIIGSEEWCSFPELGIPAIKARVDSGAKTSSIHAVNIQTFQRDGEEWVSFEVHPLRIDRRTVVRCQRPVIDKRIIKNSSGNSETRFVIRTPLKLNKKVWDIELTLSNRDAMGFRMLLGREAMMDRLIIDPALQCALGEVSKESLGKAYTKEETRKGGLKIGILACNESLYGNQRLLEAGRERGHEMLFLDIKQCYLKLDTLEPEVHYKGRLLNDLDAVLTKIGSNITPYATALSRQFESMGIYTCNSSSAISQSGDKLFSLQLLLKSGINIPITGFANSPIDASDLIEMVGGAPLIIKLLEGGQGQGPILAKTKNAAESLINTFKFLRANLLVQQFIKEANGKILRCLVINGKVVASIERTAASGELSSNTHQDGKSSIVKITPEERSLALKAAKVLGLQIASVDIINSKAGPLLLEVNSSPELEGIEIATGKDIAGMVISSIEKKLQWKRPLPQQS</sequence>
<proteinExistence type="inferred from homology"/>